<name>QUEA_CLOPE</name>
<sequence length="341" mass="38979">MKVSDFYFELPEELIAQYPLEKRDSSRLMVLDKKTGEIEHRKFHDILEYLNEGDTLVLNNTRVLPARLIGEKEETGGKIEFLLLKRIEGDKWECLAKPGRKAKVGTVFTFGEGKLKAIVREIGEEGNRIIEFKYDGIFEQVLDELGQMPLPPYIHEKLEDKERYQTVYSKEKGSAAAPTAGLHFTEELLKEIKDKGVNIAYLTLHVGLGTFRPVKVDDVNNHVMHSEYYHLDKENAELINKTKEAGKRVIAVGTTSSRTLETIGDENGRVREQSGWTDIFIYPGYKFKIVDNLITNFHLPESTLIMLVSALAGQDNIMNAYNTAVKEKYRFFSFGDSMFIK</sequence>
<comment type="function">
    <text evidence="1">Transfers and isomerizes the ribose moiety from AdoMet to the 7-aminomethyl group of 7-deazaguanine (preQ1-tRNA) to give epoxyqueuosine (oQ-tRNA).</text>
</comment>
<comment type="catalytic activity">
    <reaction evidence="1">
        <text>7-aminomethyl-7-carbaguanosine(34) in tRNA + S-adenosyl-L-methionine = epoxyqueuosine(34) in tRNA + adenine + L-methionine + 2 H(+)</text>
        <dbReference type="Rhea" id="RHEA:32155"/>
        <dbReference type="Rhea" id="RHEA-COMP:10342"/>
        <dbReference type="Rhea" id="RHEA-COMP:18582"/>
        <dbReference type="ChEBI" id="CHEBI:15378"/>
        <dbReference type="ChEBI" id="CHEBI:16708"/>
        <dbReference type="ChEBI" id="CHEBI:57844"/>
        <dbReference type="ChEBI" id="CHEBI:59789"/>
        <dbReference type="ChEBI" id="CHEBI:82833"/>
        <dbReference type="ChEBI" id="CHEBI:194443"/>
        <dbReference type="EC" id="2.4.99.17"/>
    </reaction>
</comment>
<comment type="pathway">
    <text evidence="1">tRNA modification; tRNA-queuosine biosynthesis.</text>
</comment>
<comment type="subunit">
    <text evidence="1">Monomer.</text>
</comment>
<comment type="subcellular location">
    <subcellularLocation>
        <location evidence="1">Cytoplasm</location>
    </subcellularLocation>
</comment>
<comment type="similarity">
    <text evidence="1">Belongs to the QueA family.</text>
</comment>
<gene>
    <name evidence="1" type="primary">queA</name>
    <name type="ordered locus">CPE1946</name>
</gene>
<proteinExistence type="inferred from homology"/>
<reference key="1">
    <citation type="journal article" date="2002" name="Proc. Natl. Acad. Sci. U.S.A.">
        <title>Complete genome sequence of Clostridium perfringens, an anaerobic flesh-eater.</title>
        <authorList>
            <person name="Shimizu T."/>
            <person name="Ohtani K."/>
            <person name="Hirakawa H."/>
            <person name="Ohshima K."/>
            <person name="Yamashita A."/>
            <person name="Shiba T."/>
            <person name="Ogasawara N."/>
            <person name="Hattori M."/>
            <person name="Kuhara S."/>
            <person name="Hayashi H."/>
        </authorList>
    </citation>
    <scope>NUCLEOTIDE SEQUENCE [LARGE SCALE GENOMIC DNA]</scope>
    <source>
        <strain>13 / Type A</strain>
    </source>
</reference>
<dbReference type="EC" id="2.4.99.17" evidence="1"/>
<dbReference type="EMBL" id="BA000016">
    <property type="protein sequence ID" value="BAB81652.1"/>
    <property type="molecule type" value="Genomic_DNA"/>
</dbReference>
<dbReference type="RefSeq" id="WP_003461896.1">
    <property type="nucleotide sequence ID" value="NC_003366.1"/>
</dbReference>
<dbReference type="SMR" id="Q8XJ15"/>
<dbReference type="STRING" id="195102.gene:10491215"/>
<dbReference type="GeneID" id="93001517"/>
<dbReference type="KEGG" id="cpe:CPE1946"/>
<dbReference type="HOGENOM" id="CLU_039110_1_0_9"/>
<dbReference type="UniPathway" id="UPA00392"/>
<dbReference type="Proteomes" id="UP000000818">
    <property type="component" value="Chromosome"/>
</dbReference>
<dbReference type="GO" id="GO:0005737">
    <property type="term" value="C:cytoplasm"/>
    <property type="evidence" value="ECO:0007669"/>
    <property type="project" value="UniProtKB-SubCell"/>
</dbReference>
<dbReference type="GO" id="GO:0051075">
    <property type="term" value="F:S-adenosylmethionine:tRNA ribosyltransferase-isomerase activity"/>
    <property type="evidence" value="ECO:0007669"/>
    <property type="project" value="UniProtKB-EC"/>
</dbReference>
<dbReference type="GO" id="GO:0008616">
    <property type="term" value="P:queuosine biosynthetic process"/>
    <property type="evidence" value="ECO:0007669"/>
    <property type="project" value="UniProtKB-UniRule"/>
</dbReference>
<dbReference type="GO" id="GO:0002099">
    <property type="term" value="P:tRNA wobble guanine modification"/>
    <property type="evidence" value="ECO:0007669"/>
    <property type="project" value="TreeGrafter"/>
</dbReference>
<dbReference type="FunFam" id="2.40.10.240:FF:000002">
    <property type="entry name" value="S-adenosylmethionine:tRNA ribosyltransferase-isomerase"/>
    <property type="match status" value="1"/>
</dbReference>
<dbReference type="FunFam" id="3.40.1780.10:FF:000001">
    <property type="entry name" value="S-adenosylmethionine:tRNA ribosyltransferase-isomerase"/>
    <property type="match status" value="1"/>
</dbReference>
<dbReference type="Gene3D" id="2.40.10.240">
    <property type="entry name" value="QueA-like"/>
    <property type="match status" value="1"/>
</dbReference>
<dbReference type="Gene3D" id="3.40.1780.10">
    <property type="entry name" value="QueA-like"/>
    <property type="match status" value="1"/>
</dbReference>
<dbReference type="HAMAP" id="MF_00113">
    <property type="entry name" value="QueA"/>
    <property type="match status" value="1"/>
</dbReference>
<dbReference type="InterPro" id="IPR003699">
    <property type="entry name" value="QueA"/>
</dbReference>
<dbReference type="InterPro" id="IPR042118">
    <property type="entry name" value="QueA_dom1"/>
</dbReference>
<dbReference type="InterPro" id="IPR042119">
    <property type="entry name" value="QueA_dom2"/>
</dbReference>
<dbReference type="InterPro" id="IPR036100">
    <property type="entry name" value="QueA_sf"/>
</dbReference>
<dbReference type="NCBIfam" id="NF001140">
    <property type="entry name" value="PRK00147.1"/>
    <property type="match status" value="1"/>
</dbReference>
<dbReference type="NCBIfam" id="TIGR00113">
    <property type="entry name" value="queA"/>
    <property type="match status" value="1"/>
</dbReference>
<dbReference type="PANTHER" id="PTHR30307">
    <property type="entry name" value="S-ADENOSYLMETHIONINE:TRNA RIBOSYLTRANSFERASE-ISOMERASE"/>
    <property type="match status" value="1"/>
</dbReference>
<dbReference type="PANTHER" id="PTHR30307:SF0">
    <property type="entry name" value="S-ADENOSYLMETHIONINE:TRNA RIBOSYLTRANSFERASE-ISOMERASE"/>
    <property type="match status" value="1"/>
</dbReference>
<dbReference type="Pfam" id="PF02547">
    <property type="entry name" value="Queuosine_synth"/>
    <property type="match status" value="1"/>
</dbReference>
<dbReference type="SUPFAM" id="SSF111337">
    <property type="entry name" value="QueA-like"/>
    <property type="match status" value="1"/>
</dbReference>
<organism>
    <name type="scientific">Clostridium perfringens (strain 13 / Type A)</name>
    <dbReference type="NCBI Taxonomy" id="195102"/>
    <lineage>
        <taxon>Bacteria</taxon>
        <taxon>Bacillati</taxon>
        <taxon>Bacillota</taxon>
        <taxon>Clostridia</taxon>
        <taxon>Eubacteriales</taxon>
        <taxon>Clostridiaceae</taxon>
        <taxon>Clostridium</taxon>
    </lineage>
</organism>
<feature type="chain" id="PRO_0000165396" description="S-adenosylmethionine:tRNA ribosyltransferase-isomerase">
    <location>
        <begin position="1"/>
        <end position="341"/>
    </location>
</feature>
<protein>
    <recommendedName>
        <fullName evidence="1">S-adenosylmethionine:tRNA ribosyltransferase-isomerase</fullName>
        <ecNumber evidence="1">2.4.99.17</ecNumber>
    </recommendedName>
    <alternativeName>
        <fullName evidence="1">Queuosine biosynthesis protein QueA</fullName>
    </alternativeName>
</protein>
<keyword id="KW-0963">Cytoplasm</keyword>
<keyword id="KW-0671">Queuosine biosynthesis</keyword>
<keyword id="KW-1185">Reference proteome</keyword>
<keyword id="KW-0949">S-adenosyl-L-methionine</keyword>
<keyword id="KW-0808">Transferase</keyword>
<accession>Q8XJ15</accession>
<evidence type="ECO:0000255" key="1">
    <source>
        <dbReference type="HAMAP-Rule" id="MF_00113"/>
    </source>
</evidence>